<name>PLSX_EHRCR</name>
<proteinExistence type="inferred from homology"/>
<organism>
    <name type="scientific">Ehrlichia chaffeensis (strain ATCC CRL-10679 / Arkansas)</name>
    <dbReference type="NCBI Taxonomy" id="205920"/>
    <lineage>
        <taxon>Bacteria</taxon>
        <taxon>Pseudomonadati</taxon>
        <taxon>Pseudomonadota</taxon>
        <taxon>Alphaproteobacteria</taxon>
        <taxon>Rickettsiales</taxon>
        <taxon>Anaplasmataceae</taxon>
        <taxon>Ehrlichia</taxon>
    </lineage>
</organism>
<accession>Q2GH18</accession>
<gene>
    <name evidence="1" type="primary">plsX</name>
    <name type="ordered locus">ECH_0447</name>
</gene>
<evidence type="ECO:0000255" key="1">
    <source>
        <dbReference type="HAMAP-Rule" id="MF_00019"/>
    </source>
</evidence>
<dbReference type="EC" id="2.3.1.274" evidence="1"/>
<dbReference type="EMBL" id="CP000236">
    <property type="protein sequence ID" value="ABD44515.1"/>
    <property type="molecule type" value="Genomic_DNA"/>
</dbReference>
<dbReference type="RefSeq" id="WP_006011401.1">
    <property type="nucleotide sequence ID" value="NC_007799.1"/>
</dbReference>
<dbReference type="SMR" id="Q2GH18"/>
<dbReference type="STRING" id="205920.ECH_0447"/>
<dbReference type="KEGG" id="ech:ECH_0447"/>
<dbReference type="eggNOG" id="COG0416">
    <property type="taxonomic scope" value="Bacteria"/>
</dbReference>
<dbReference type="HOGENOM" id="CLU_039379_1_0_5"/>
<dbReference type="OrthoDB" id="9806408at2"/>
<dbReference type="UniPathway" id="UPA00085"/>
<dbReference type="Proteomes" id="UP000008320">
    <property type="component" value="Chromosome"/>
</dbReference>
<dbReference type="GO" id="GO:0005737">
    <property type="term" value="C:cytoplasm"/>
    <property type="evidence" value="ECO:0007669"/>
    <property type="project" value="UniProtKB-SubCell"/>
</dbReference>
<dbReference type="GO" id="GO:0043811">
    <property type="term" value="F:phosphate:acyl-[acyl carrier protein] acyltransferase activity"/>
    <property type="evidence" value="ECO:0007669"/>
    <property type="project" value="UniProtKB-UniRule"/>
</dbReference>
<dbReference type="GO" id="GO:0006633">
    <property type="term" value="P:fatty acid biosynthetic process"/>
    <property type="evidence" value="ECO:0007669"/>
    <property type="project" value="UniProtKB-UniRule"/>
</dbReference>
<dbReference type="GO" id="GO:0008654">
    <property type="term" value="P:phospholipid biosynthetic process"/>
    <property type="evidence" value="ECO:0007669"/>
    <property type="project" value="UniProtKB-KW"/>
</dbReference>
<dbReference type="Gene3D" id="3.40.718.10">
    <property type="entry name" value="Isopropylmalate Dehydrogenase"/>
    <property type="match status" value="1"/>
</dbReference>
<dbReference type="HAMAP" id="MF_00019">
    <property type="entry name" value="PlsX"/>
    <property type="match status" value="1"/>
</dbReference>
<dbReference type="InterPro" id="IPR003664">
    <property type="entry name" value="FA_synthesis"/>
</dbReference>
<dbReference type="InterPro" id="IPR012281">
    <property type="entry name" value="Phospholipid_synth_PlsX-like"/>
</dbReference>
<dbReference type="NCBIfam" id="TIGR00182">
    <property type="entry name" value="plsX"/>
    <property type="match status" value="1"/>
</dbReference>
<dbReference type="PANTHER" id="PTHR30100">
    <property type="entry name" value="FATTY ACID/PHOSPHOLIPID SYNTHESIS PROTEIN PLSX"/>
    <property type="match status" value="1"/>
</dbReference>
<dbReference type="PANTHER" id="PTHR30100:SF1">
    <property type="entry name" value="PHOSPHATE ACYLTRANSFERASE"/>
    <property type="match status" value="1"/>
</dbReference>
<dbReference type="Pfam" id="PF02504">
    <property type="entry name" value="FA_synthesis"/>
    <property type="match status" value="1"/>
</dbReference>
<dbReference type="PIRSF" id="PIRSF002465">
    <property type="entry name" value="Phsphlp_syn_PlsX"/>
    <property type="match status" value="1"/>
</dbReference>
<dbReference type="SUPFAM" id="SSF53659">
    <property type="entry name" value="Isocitrate/Isopropylmalate dehydrogenase-like"/>
    <property type="match status" value="1"/>
</dbReference>
<reference key="1">
    <citation type="journal article" date="2006" name="PLoS Genet.">
        <title>Comparative genomics of emerging human ehrlichiosis agents.</title>
        <authorList>
            <person name="Dunning Hotopp J.C."/>
            <person name="Lin M."/>
            <person name="Madupu R."/>
            <person name="Crabtree J."/>
            <person name="Angiuoli S.V."/>
            <person name="Eisen J.A."/>
            <person name="Seshadri R."/>
            <person name="Ren Q."/>
            <person name="Wu M."/>
            <person name="Utterback T.R."/>
            <person name="Smith S."/>
            <person name="Lewis M."/>
            <person name="Khouri H."/>
            <person name="Zhang C."/>
            <person name="Niu H."/>
            <person name="Lin Q."/>
            <person name="Ohashi N."/>
            <person name="Zhi N."/>
            <person name="Nelson W.C."/>
            <person name="Brinkac L.M."/>
            <person name="Dodson R.J."/>
            <person name="Rosovitz M.J."/>
            <person name="Sundaram J.P."/>
            <person name="Daugherty S.C."/>
            <person name="Davidsen T."/>
            <person name="Durkin A.S."/>
            <person name="Gwinn M.L."/>
            <person name="Haft D.H."/>
            <person name="Selengut J.D."/>
            <person name="Sullivan S.A."/>
            <person name="Zafar N."/>
            <person name="Zhou L."/>
            <person name="Benahmed F."/>
            <person name="Forberger H."/>
            <person name="Halpin R."/>
            <person name="Mulligan S."/>
            <person name="Robinson J."/>
            <person name="White O."/>
            <person name="Rikihisa Y."/>
            <person name="Tettelin H."/>
        </authorList>
    </citation>
    <scope>NUCLEOTIDE SEQUENCE [LARGE SCALE GENOMIC DNA]</scope>
    <source>
        <strain>ATCC CRL-10679 / Arkansas</strain>
    </source>
</reference>
<feature type="chain" id="PRO_1000001758" description="Phosphate acyltransferase">
    <location>
        <begin position="1"/>
        <end position="337"/>
    </location>
</feature>
<keyword id="KW-0963">Cytoplasm</keyword>
<keyword id="KW-0444">Lipid biosynthesis</keyword>
<keyword id="KW-0443">Lipid metabolism</keyword>
<keyword id="KW-0594">Phospholipid biosynthesis</keyword>
<keyword id="KW-1208">Phospholipid metabolism</keyword>
<keyword id="KW-1185">Reference proteome</keyword>
<keyword id="KW-0808">Transferase</keyword>
<protein>
    <recommendedName>
        <fullName evidence="1">Phosphate acyltransferase</fullName>
        <ecNumber evidence="1">2.3.1.274</ecNumber>
    </recommendedName>
    <alternativeName>
        <fullName evidence="1">Acyl-ACP phosphotransacylase</fullName>
    </alternativeName>
    <alternativeName>
        <fullName evidence="1">Acyl-[acyl-carrier-protein]--phosphate acyltransferase</fullName>
    </alternativeName>
    <alternativeName>
        <fullName evidence="1">Phosphate-acyl-ACP acyltransferase</fullName>
    </alternativeName>
</protein>
<comment type="function">
    <text evidence="1">Catalyzes the reversible formation of acyl-phosphate (acyl-PO(4)) from acyl-[acyl-carrier-protein] (acyl-ACP). This enzyme utilizes acyl-ACP as fatty acyl donor, but not acyl-CoA.</text>
</comment>
<comment type="catalytic activity">
    <reaction evidence="1">
        <text>a fatty acyl-[ACP] + phosphate = an acyl phosphate + holo-[ACP]</text>
        <dbReference type="Rhea" id="RHEA:42292"/>
        <dbReference type="Rhea" id="RHEA-COMP:9685"/>
        <dbReference type="Rhea" id="RHEA-COMP:14125"/>
        <dbReference type="ChEBI" id="CHEBI:43474"/>
        <dbReference type="ChEBI" id="CHEBI:59918"/>
        <dbReference type="ChEBI" id="CHEBI:64479"/>
        <dbReference type="ChEBI" id="CHEBI:138651"/>
        <dbReference type="EC" id="2.3.1.274"/>
    </reaction>
</comment>
<comment type="pathway">
    <text evidence="1">Lipid metabolism; phospholipid metabolism.</text>
</comment>
<comment type="subunit">
    <text evidence="1">Homodimer. Probably interacts with PlsY.</text>
</comment>
<comment type="subcellular location">
    <subcellularLocation>
        <location evidence="1">Cytoplasm</location>
    </subcellularLocation>
    <text evidence="1">Associated with the membrane possibly through PlsY.</text>
</comment>
<comment type="similarity">
    <text evidence="1">Belongs to the PlsX family.</text>
</comment>
<sequence length="337" mass="36251">MSIISIAVDAMGGDFAPEAVVSGLDFALTNLLDDQNVSFNIYGQGSQVLPILDKYKDLKEHSVFIDTPEVVLANDKPSFALRKRRSSSMWCAIDSIKSGVTSGVVSSGNTGALMAISRFLLGTLPNIDRPAICTALPSRGEEYFVLLDLGANIESSSNALFQFAIMGSAFAKAVLNIASPKVALLNVGQEEVKGTDVIREAFLLLKQAEGRINFCGYIEPIDILGDKVDVVVTDGFCGNIVLKVAESIAYTFKSVFEKSVTSSIISKFAGLLLKSQMKKDFMRFNPKMYNGAMLLGLNGVVVKSHGNADKVAFAHAIKVTVNAVRNDINAKIIHELS</sequence>